<proteinExistence type="evidence at protein level"/>
<sequence>MTSIPVSSFLLAALVLQYATSDAVNYCRLPCRGDNYHVGCGEPAYAQECGQSPRTRELLKEHRNEILSKINDVRDHVAKGSWGLPVAARMKVVVWDAELAGLAKRHTKGCVGETHACRNTERFWLPGQLNFKYSGDKLPRIKELIDDAVKKGHLQKHNITREIIGNYRENGPNGDVKELALAISDRVTAVGCGLTTWQDGAKARALLTCNFSSQNTRGRPVYKIGNSPGEKCIEKDETYKNLCPATEPIDPNKSN</sequence>
<protein>
    <recommendedName>
        <fullName evidence="4">Tablysin 15</fullName>
    </recommendedName>
    <alternativeName>
        <fullName evidence="4">Disintegrin</fullName>
    </alternativeName>
</protein>
<evidence type="ECO:0000255" key="1"/>
<evidence type="ECO:0000269" key="2">
    <source>
    </source>
</evidence>
<evidence type="ECO:0000269" key="3">
    <source>
    </source>
</evidence>
<evidence type="ECO:0000303" key="4">
    <source>
    </source>
</evidence>
<evidence type="ECO:0000305" key="5"/>
<evidence type="ECO:0000305" key="6">
    <source>
    </source>
</evidence>
<evidence type="ECO:0000312" key="7">
    <source>
        <dbReference type="EMBL" id="ADK94760.1"/>
    </source>
</evidence>
<evidence type="ECO:0007744" key="8">
    <source>
        <dbReference type="PDB" id="3U3L"/>
    </source>
</evidence>
<evidence type="ECO:0007744" key="9">
    <source>
        <dbReference type="PDB" id="3U3N"/>
    </source>
</evidence>
<evidence type="ECO:0007829" key="10">
    <source>
        <dbReference type="PDB" id="3U3L"/>
    </source>
</evidence>
<evidence type="ECO:0007829" key="11">
    <source>
        <dbReference type="PDB" id="3U3U"/>
    </source>
</evidence>
<accession>F8QQG5</accession>
<reference evidence="7" key="1">
    <citation type="journal article" date="2011" name="Thromb. Haemost.">
        <title>A novel family of RGD-containing disintegrins (Tablysin-15) from the salivary gland of the horsefly Tabanus yao targets alphaIIbbeta3 or alphaVbeta3 and inhibits platelet aggregation and angiogenesis.</title>
        <authorList>
            <person name="Ma D."/>
            <person name="Xu X."/>
            <person name="An S."/>
            <person name="Liu H."/>
            <person name="Yang X."/>
            <person name="Andersen J.F."/>
            <person name="Wang Y."/>
            <person name="Tokumasu F."/>
            <person name="Ribeiro J.M."/>
            <person name="Francischetti I.M."/>
            <person name="Lai R."/>
        </authorList>
    </citation>
    <scope>NUCLEOTIDE SEQUENCE [MRNA]</scope>
    <scope>PROTEIN SEQUENCE OF 24-39; 80-88; 92-100; 187-200; 205-216 AND 241-252</scope>
    <scope>FUNCTION</scope>
    <scope>SUBCELLULAR LOCATION</scope>
    <scope>TISSUE SPECIFICITY</scope>
    <scope>RECOMBINANT EXPRESSION</scope>
    <source>
        <tissue>Salivary gland</tissue>
    </source>
</reference>
<reference evidence="8 9" key="2">
    <citation type="journal article" date="2012" name="J. Biol. Chem.">
        <title>Structure of protein having inhibitory disintegrin and leukotriene scavenging functions contained in single domain.</title>
        <authorList>
            <person name="Xu X."/>
            <person name="Francischetti I.M."/>
            <person name="Lai R."/>
            <person name="Ribeiro J.M."/>
            <person name="Andersen J.F."/>
        </authorList>
    </citation>
    <scope>X-RAY CRYSTALLOGRAPHY (1.57 ANGSTROMS) OF 24-255</scope>
    <scope>FUNCTION</scope>
    <scope>DISULFIDE BONDS</scope>
    <scope>BINDING TO LEUKOTRIENE C4</scope>
    <scope>MUTAGENESIS OF 32-ARG--ASP-34</scope>
</reference>
<keyword id="KW-0002">3D-structure</keyword>
<keyword id="KW-0903">Direct protein sequencing</keyword>
<keyword id="KW-1015">Disulfide bond</keyword>
<keyword id="KW-1199">Hemostasis impairing toxin</keyword>
<keyword id="KW-1201">Platelet aggregation inhibiting toxin</keyword>
<keyword id="KW-0964">Secreted</keyword>
<keyword id="KW-0732">Signal</keyword>
<keyword id="KW-0800">Toxin</keyword>
<feature type="signal peptide" evidence="1 6">
    <location>
        <begin position="1"/>
        <end position="23"/>
    </location>
</feature>
<feature type="chain" id="PRO_5003377418" description="Tablysin 15">
    <location>
        <begin position="24"/>
        <end position="255"/>
    </location>
</feature>
<feature type="domain" description="SCP" evidence="1">
    <location>
        <begin position="67"/>
        <end position="211"/>
    </location>
</feature>
<feature type="short sequence motif" description="Cell attachment site" evidence="3">
    <location>
        <begin position="32"/>
        <end position="34"/>
    </location>
</feature>
<feature type="binding site" evidence="3">
    <location>
        <position position="82"/>
    </location>
    <ligand>
        <name>leukotriene E4</name>
        <dbReference type="ChEBI" id="CHEBI:57462"/>
    </ligand>
</feature>
<feature type="binding site" evidence="3">
    <location>
        <position position="153"/>
    </location>
    <ligand>
        <name>leukotriene E4</name>
        <dbReference type="ChEBI" id="CHEBI:57462"/>
    </ligand>
</feature>
<feature type="binding site" evidence="3">
    <location>
        <position position="156"/>
    </location>
    <ligand>
        <name>leukotriene E4</name>
        <dbReference type="ChEBI" id="CHEBI:57462"/>
    </ligand>
</feature>
<feature type="disulfide bond" evidence="3 8 9">
    <location>
        <begin position="27"/>
        <end position="40"/>
    </location>
</feature>
<feature type="disulfide bond" evidence="3 8 9">
    <location>
        <begin position="31"/>
        <end position="117"/>
    </location>
</feature>
<feature type="disulfide bond" evidence="3 8 9">
    <location>
        <begin position="49"/>
        <end position="110"/>
    </location>
</feature>
<feature type="disulfide bond" evidence="3 8 9">
    <location>
        <begin position="192"/>
        <end position="209"/>
    </location>
</feature>
<feature type="disulfide bond" evidence="3 8 9">
    <location>
        <begin position="232"/>
        <end position="243"/>
    </location>
</feature>
<feature type="mutagenesis site" description="Loss of ability to inhibit platelet aggregation induced by collagen and convulxin." evidence="3">
    <original>RGD</original>
    <variation>AGA</variation>
    <location>
        <begin position="32"/>
        <end position="34"/>
    </location>
</feature>
<feature type="helix" evidence="10">
    <location>
        <begin position="26"/>
        <end position="28"/>
    </location>
</feature>
<feature type="helix" evidence="10">
    <location>
        <begin position="47"/>
        <end position="49"/>
    </location>
</feature>
<feature type="helix" evidence="10">
    <location>
        <begin position="60"/>
        <end position="78"/>
    </location>
</feature>
<feature type="helix" evidence="11">
    <location>
        <begin position="81"/>
        <end position="83"/>
    </location>
</feature>
<feature type="strand" evidence="10">
    <location>
        <begin position="87"/>
        <end position="89"/>
    </location>
</feature>
<feature type="helix" evidence="10">
    <location>
        <begin position="97"/>
        <end position="107"/>
    </location>
</feature>
<feature type="turn" evidence="11">
    <location>
        <begin position="108"/>
        <end position="110"/>
    </location>
</feature>
<feature type="strand" evidence="10">
    <location>
        <begin position="127"/>
        <end position="137"/>
    </location>
</feature>
<feature type="helix" evidence="10">
    <location>
        <begin position="141"/>
        <end position="153"/>
    </location>
</feature>
<feature type="helix" evidence="10">
    <location>
        <begin position="154"/>
        <end position="157"/>
    </location>
</feature>
<feature type="helix" evidence="10">
    <location>
        <begin position="161"/>
        <end position="165"/>
    </location>
</feature>
<feature type="strand" evidence="11">
    <location>
        <begin position="172"/>
        <end position="174"/>
    </location>
</feature>
<feature type="helix" evidence="10">
    <location>
        <begin position="177"/>
        <end position="182"/>
    </location>
</feature>
<feature type="strand" evidence="10">
    <location>
        <begin position="189"/>
        <end position="199"/>
    </location>
</feature>
<feature type="strand" evidence="10">
    <location>
        <begin position="202"/>
        <end position="212"/>
    </location>
</feature>
<feature type="turn" evidence="10">
    <location>
        <begin position="228"/>
        <end position="231"/>
    </location>
</feature>
<feature type="strand" evidence="10">
    <location>
        <begin position="233"/>
        <end position="235"/>
    </location>
</feature>
<feature type="strand" evidence="10">
    <location>
        <begin position="237"/>
        <end position="239"/>
    </location>
</feature>
<name>LYSF_TABYA</name>
<dbReference type="EMBL" id="GU363426">
    <property type="protein sequence ID" value="ADK94760.1"/>
    <property type="molecule type" value="mRNA"/>
</dbReference>
<dbReference type="PDB" id="3U3L">
    <property type="method" value="X-ray"/>
    <property type="resolution" value="1.57 A"/>
    <property type="chains" value="C=24-255"/>
</dbReference>
<dbReference type="PDB" id="3U3N">
    <property type="method" value="X-ray"/>
    <property type="resolution" value="1.65 A"/>
    <property type="chains" value="C=24-255"/>
</dbReference>
<dbReference type="PDB" id="3U3U">
    <property type="method" value="X-ray"/>
    <property type="resolution" value="2.50 A"/>
    <property type="chains" value="C=24-255"/>
</dbReference>
<dbReference type="PDBsum" id="3U3L"/>
<dbReference type="PDBsum" id="3U3N"/>
<dbReference type="PDBsum" id="3U3U"/>
<dbReference type="SMR" id="F8QQG5"/>
<dbReference type="EvolutionaryTrace" id="F8QQG5"/>
<dbReference type="GO" id="GO:0005576">
    <property type="term" value="C:extracellular region"/>
    <property type="evidence" value="ECO:0007669"/>
    <property type="project" value="UniProtKB-SubCell"/>
</dbReference>
<dbReference type="GO" id="GO:0090729">
    <property type="term" value="F:toxin activity"/>
    <property type="evidence" value="ECO:0007669"/>
    <property type="project" value="UniProtKB-KW"/>
</dbReference>
<dbReference type="CDD" id="cd05380">
    <property type="entry name" value="CAP_euk"/>
    <property type="match status" value="1"/>
</dbReference>
<dbReference type="Gene3D" id="3.40.33.10">
    <property type="entry name" value="CAP"/>
    <property type="match status" value="1"/>
</dbReference>
<dbReference type="InterPro" id="IPR014044">
    <property type="entry name" value="CAP_dom"/>
</dbReference>
<dbReference type="InterPro" id="IPR035940">
    <property type="entry name" value="CAP_sf"/>
</dbReference>
<dbReference type="InterPro" id="IPR034763">
    <property type="entry name" value="P14a_insect"/>
</dbReference>
<dbReference type="Pfam" id="PF00188">
    <property type="entry name" value="CAP"/>
    <property type="match status" value="1"/>
</dbReference>
<dbReference type="PIRSF" id="PIRSF038921">
    <property type="entry name" value="P14a"/>
    <property type="match status" value="1"/>
</dbReference>
<dbReference type="SMART" id="SM00198">
    <property type="entry name" value="SCP"/>
    <property type="match status" value="1"/>
</dbReference>
<dbReference type="SUPFAM" id="SSF55797">
    <property type="entry name" value="PR-1-like"/>
    <property type="match status" value="1"/>
</dbReference>
<organism>
    <name type="scientific">Tabanus yao</name>
    <name type="common">Horsefly</name>
    <dbReference type="NCBI Taxonomy" id="485572"/>
    <lineage>
        <taxon>Eukaryota</taxon>
        <taxon>Metazoa</taxon>
        <taxon>Ecdysozoa</taxon>
        <taxon>Arthropoda</taxon>
        <taxon>Hexapoda</taxon>
        <taxon>Insecta</taxon>
        <taxon>Pterygota</taxon>
        <taxon>Neoptera</taxon>
        <taxon>Endopterygota</taxon>
        <taxon>Diptera</taxon>
        <taxon>Brachycera</taxon>
        <taxon>Tabanomorpha</taxon>
        <taxon>Tabanoidea</taxon>
        <taxon>Tabanidae</taxon>
        <taxon>Tabanus</taxon>
    </lineage>
</organism>
<comment type="function">
    <text evidence="2 3">Anti-inflammatory scavenger of eicosanoids and antithrombotic protein that inhibits platelets aggregation induced by collagen, ADP and convulxin (GPVI agonist) (PubMed:21475772, PubMed:22311975). Exhibits high affinity binding for glycoprotein IIb-IIIa receptor (ITGA2B/ITGB3) and endothelial cell alphaVbeta3 (ITGAV/ITGB3) integrins, but not for alpha-5/beta-1 or alpha-2/beta-1 (PubMed:21475772). Accordingly, it blocks endothelial cell adhesion to vitronectin (IC(50)~1 nM) and marginally to fibronectin (IC(50)~1 uM), but not to collagen (PubMed:21475772). It also inhibits fibroblast growth factor (FGF)-induced endothelial cell proliferation, and attenuates tube formation in vitro (PubMed:21475772). In addition, it dose-dependently attenuates thrombus formation to collagen under flow (PubMed:21475772). Also binds proinflammatory cysteinyl leukotrienes (leukotrienes C4 (LTC4), D4 (LTD4) and E4 (LTE4)) with submicromolar affinities (PubMed:22311975).</text>
</comment>
<comment type="subcellular location">
    <subcellularLocation>
        <location evidence="2">Secreted</location>
    </subcellularLocation>
</comment>
<comment type="tissue specificity">
    <text evidence="2">Expressed in salivary glands.</text>
</comment>
<comment type="similarity">
    <text evidence="5">Belongs to the CRISP family.</text>
</comment>